<reference key="1">
    <citation type="journal article" date="2009" name="PLoS Genet.">
        <title>Organised genome dynamics in the Escherichia coli species results in highly diverse adaptive paths.</title>
        <authorList>
            <person name="Touchon M."/>
            <person name="Hoede C."/>
            <person name="Tenaillon O."/>
            <person name="Barbe V."/>
            <person name="Baeriswyl S."/>
            <person name="Bidet P."/>
            <person name="Bingen E."/>
            <person name="Bonacorsi S."/>
            <person name="Bouchier C."/>
            <person name="Bouvet O."/>
            <person name="Calteau A."/>
            <person name="Chiapello H."/>
            <person name="Clermont O."/>
            <person name="Cruveiller S."/>
            <person name="Danchin A."/>
            <person name="Diard M."/>
            <person name="Dossat C."/>
            <person name="Karoui M.E."/>
            <person name="Frapy E."/>
            <person name="Garry L."/>
            <person name="Ghigo J.M."/>
            <person name="Gilles A.M."/>
            <person name="Johnson J."/>
            <person name="Le Bouguenec C."/>
            <person name="Lescat M."/>
            <person name="Mangenot S."/>
            <person name="Martinez-Jehanne V."/>
            <person name="Matic I."/>
            <person name="Nassif X."/>
            <person name="Oztas S."/>
            <person name="Petit M.A."/>
            <person name="Pichon C."/>
            <person name="Rouy Z."/>
            <person name="Ruf C.S."/>
            <person name="Schneider D."/>
            <person name="Tourret J."/>
            <person name="Vacherie B."/>
            <person name="Vallenet D."/>
            <person name="Medigue C."/>
            <person name="Rocha E.P.C."/>
            <person name="Denamur E."/>
        </authorList>
    </citation>
    <scope>NUCLEOTIDE SEQUENCE [LARGE SCALE GENOMIC DNA]</scope>
    <source>
        <strain>55989 / EAEC</strain>
    </source>
</reference>
<sequence length="160" mass="18269">MTKKKAHKPGSATIALNKRARHEYFIEEEFEAGLALQGWEVKSLRAGKANISDSYVLLRDGEAFLFGANITPMAVASTHVVCDPTRTRKLLLNQRELDSLYGRVNREGYTVVALSLYWKNAWCKVKIGVAKGKKQHDKRSDIKEREWQVDKARIMKNAHR</sequence>
<evidence type="ECO:0000255" key="1">
    <source>
        <dbReference type="HAMAP-Rule" id="MF_00023"/>
    </source>
</evidence>
<accession>B7LDK8</accession>
<comment type="function">
    <text evidence="1">Required for rescue of stalled ribosomes mediated by trans-translation. Binds to transfer-messenger RNA (tmRNA), required for stable association of tmRNA with ribosomes. tmRNA and SmpB together mimic tRNA shape, replacing the anticodon stem-loop with SmpB. tmRNA is encoded by the ssrA gene; the 2 termini fold to resemble tRNA(Ala) and it encodes a 'tag peptide', a short internal open reading frame. During trans-translation Ala-aminoacylated tmRNA acts like a tRNA, entering the A-site of stalled ribosomes, displacing the stalled mRNA. The ribosome then switches to translate the ORF on the tmRNA; the nascent peptide is terminated with the 'tag peptide' encoded by the tmRNA and targeted for degradation. The ribosome is freed to recommence translation, which seems to be the essential function of trans-translation.</text>
</comment>
<comment type="subcellular location">
    <subcellularLocation>
        <location evidence="1">Cytoplasm</location>
    </subcellularLocation>
    <text evidence="1">The tmRNA-SmpB complex associates with stalled 70S ribosomes.</text>
</comment>
<comment type="similarity">
    <text evidence="1">Belongs to the SmpB family.</text>
</comment>
<proteinExistence type="inferred from homology"/>
<organism>
    <name type="scientific">Escherichia coli (strain 55989 / EAEC)</name>
    <dbReference type="NCBI Taxonomy" id="585055"/>
    <lineage>
        <taxon>Bacteria</taxon>
        <taxon>Pseudomonadati</taxon>
        <taxon>Pseudomonadota</taxon>
        <taxon>Gammaproteobacteria</taxon>
        <taxon>Enterobacterales</taxon>
        <taxon>Enterobacteriaceae</taxon>
        <taxon>Escherichia</taxon>
    </lineage>
</organism>
<dbReference type="EMBL" id="CU928145">
    <property type="protein sequence ID" value="CAU98775.1"/>
    <property type="molecule type" value="Genomic_DNA"/>
</dbReference>
<dbReference type="RefSeq" id="WP_000162574.1">
    <property type="nucleotide sequence ID" value="NZ_CP028304.1"/>
</dbReference>
<dbReference type="SMR" id="B7LDK8"/>
<dbReference type="GeneID" id="93774470"/>
<dbReference type="KEGG" id="eck:EC55989_2908"/>
<dbReference type="HOGENOM" id="CLU_108953_3_0_6"/>
<dbReference type="Proteomes" id="UP000000746">
    <property type="component" value="Chromosome"/>
</dbReference>
<dbReference type="GO" id="GO:0005829">
    <property type="term" value="C:cytosol"/>
    <property type="evidence" value="ECO:0007669"/>
    <property type="project" value="TreeGrafter"/>
</dbReference>
<dbReference type="GO" id="GO:0003723">
    <property type="term" value="F:RNA binding"/>
    <property type="evidence" value="ECO:0007669"/>
    <property type="project" value="UniProtKB-UniRule"/>
</dbReference>
<dbReference type="GO" id="GO:0070929">
    <property type="term" value="P:trans-translation"/>
    <property type="evidence" value="ECO:0007669"/>
    <property type="project" value="UniProtKB-UniRule"/>
</dbReference>
<dbReference type="CDD" id="cd09294">
    <property type="entry name" value="SmpB"/>
    <property type="match status" value="1"/>
</dbReference>
<dbReference type="FunFam" id="2.40.280.10:FF:000001">
    <property type="entry name" value="SsrA-binding protein"/>
    <property type="match status" value="1"/>
</dbReference>
<dbReference type="Gene3D" id="2.40.280.10">
    <property type="match status" value="1"/>
</dbReference>
<dbReference type="HAMAP" id="MF_00023">
    <property type="entry name" value="SmpB"/>
    <property type="match status" value="1"/>
</dbReference>
<dbReference type="InterPro" id="IPR023620">
    <property type="entry name" value="SmpB"/>
</dbReference>
<dbReference type="InterPro" id="IPR000037">
    <property type="entry name" value="SsrA-bd_prot"/>
</dbReference>
<dbReference type="InterPro" id="IPR020081">
    <property type="entry name" value="SsrA-bd_prot_CS"/>
</dbReference>
<dbReference type="NCBIfam" id="NF003843">
    <property type="entry name" value="PRK05422.1"/>
    <property type="match status" value="1"/>
</dbReference>
<dbReference type="NCBIfam" id="TIGR00086">
    <property type="entry name" value="smpB"/>
    <property type="match status" value="1"/>
</dbReference>
<dbReference type="PANTHER" id="PTHR30308:SF2">
    <property type="entry name" value="SSRA-BINDING PROTEIN"/>
    <property type="match status" value="1"/>
</dbReference>
<dbReference type="PANTHER" id="PTHR30308">
    <property type="entry name" value="TMRNA-BINDING COMPONENT OF TRANS-TRANSLATION TAGGING COMPLEX"/>
    <property type="match status" value="1"/>
</dbReference>
<dbReference type="Pfam" id="PF01668">
    <property type="entry name" value="SmpB"/>
    <property type="match status" value="1"/>
</dbReference>
<dbReference type="SUPFAM" id="SSF74982">
    <property type="entry name" value="Small protein B (SmpB)"/>
    <property type="match status" value="1"/>
</dbReference>
<dbReference type="PROSITE" id="PS01317">
    <property type="entry name" value="SSRP"/>
    <property type="match status" value="1"/>
</dbReference>
<protein>
    <recommendedName>
        <fullName evidence="1">SsrA-binding protein</fullName>
    </recommendedName>
    <alternativeName>
        <fullName evidence="1">Small protein B</fullName>
    </alternativeName>
</protein>
<feature type="chain" id="PRO_1000116863" description="SsrA-binding protein">
    <location>
        <begin position="1"/>
        <end position="160"/>
    </location>
</feature>
<gene>
    <name evidence="1" type="primary">smpB</name>
    <name type="ordered locus">EC55989_2908</name>
</gene>
<keyword id="KW-0963">Cytoplasm</keyword>
<keyword id="KW-1185">Reference proteome</keyword>
<keyword id="KW-0694">RNA-binding</keyword>
<name>SSRP_ECO55</name>